<protein>
    <recommendedName>
        <fullName evidence="1">Tagatose 1,6-diphosphate aldolase 2</fullName>
        <ecNumber evidence="1">4.1.2.40</ecNumber>
    </recommendedName>
    <alternativeName>
        <fullName evidence="1">D-tagatose-1,6-bisphosphate aldolase 2</fullName>
    </alternativeName>
    <alternativeName>
        <fullName evidence="1">Tagatose-bisphosphate aldolase 2</fullName>
    </alternativeName>
</protein>
<dbReference type="EC" id="4.1.2.40" evidence="1"/>
<dbReference type="EMBL" id="CP000003">
    <property type="protein sequence ID" value="AAT87779.1"/>
    <property type="molecule type" value="Genomic_DNA"/>
</dbReference>
<dbReference type="SMR" id="Q5X9Y4"/>
<dbReference type="KEGG" id="spa:M6_Spy1644"/>
<dbReference type="HOGENOM" id="CLU_058971_0_1_9"/>
<dbReference type="UniPathway" id="UPA00704">
    <property type="reaction ID" value="UER00716"/>
</dbReference>
<dbReference type="Proteomes" id="UP000001167">
    <property type="component" value="Chromosome"/>
</dbReference>
<dbReference type="GO" id="GO:0061595">
    <property type="term" value="F:6-deoxy-6-sulfofructose-1-phosphate aldolase activity"/>
    <property type="evidence" value="ECO:0007669"/>
    <property type="project" value="TreeGrafter"/>
</dbReference>
<dbReference type="GO" id="GO:0009024">
    <property type="term" value="F:tagatose-6-phosphate kinase activity"/>
    <property type="evidence" value="ECO:0007669"/>
    <property type="project" value="InterPro"/>
</dbReference>
<dbReference type="GO" id="GO:0009025">
    <property type="term" value="F:tagatose-bisphosphate aldolase activity"/>
    <property type="evidence" value="ECO:0007669"/>
    <property type="project" value="UniProtKB-UniRule"/>
</dbReference>
<dbReference type="GO" id="GO:1902777">
    <property type="term" value="P:6-sulfoquinovose(1-) catabolic process"/>
    <property type="evidence" value="ECO:0007669"/>
    <property type="project" value="TreeGrafter"/>
</dbReference>
<dbReference type="GO" id="GO:2001059">
    <property type="term" value="P:D-tagatose 6-phosphate catabolic process"/>
    <property type="evidence" value="ECO:0007669"/>
    <property type="project" value="UniProtKB-UniRule"/>
</dbReference>
<dbReference type="GO" id="GO:0019512">
    <property type="term" value="P:lactose catabolic process via tagatose-6-phosphate"/>
    <property type="evidence" value="ECO:0007669"/>
    <property type="project" value="InterPro"/>
</dbReference>
<dbReference type="FunFam" id="3.20.20.70:FF:000137">
    <property type="entry name" value="Tagatose 1,6-diphosphate aldolase 2"/>
    <property type="match status" value="1"/>
</dbReference>
<dbReference type="Gene3D" id="3.20.20.70">
    <property type="entry name" value="Aldolase class I"/>
    <property type="match status" value="1"/>
</dbReference>
<dbReference type="HAMAP" id="MF_00734">
    <property type="entry name" value="LacD"/>
    <property type="match status" value="1"/>
</dbReference>
<dbReference type="InterPro" id="IPR013785">
    <property type="entry name" value="Aldolase_TIM"/>
</dbReference>
<dbReference type="InterPro" id="IPR002915">
    <property type="entry name" value="DeoC/FbaB/LacD_aldolase"/>
</dbReference>
<dbReference type="InterPro" id="IPR050552">
    <property type="entry name" value="LacD_aldolase"/>
</dbReference>
<dbReference type="InterPro" id="IPR005927">
    <property type="entry name" value="Tag_1.6-dipho_adolase"/>
</dbReference>
<dbReference type="NCBIfam" id="TIGR01232">
    <property type="entry name" value="lacD"/>
    <property type="match status" value="1"/>
</dbReference>
<dbReference type="NCBIfam" id="NF003180">
    <property type="entry name" value="PRK04161.1"/>
    <property type="match status" value="1"/>
</dbReference>
<dbReference type="NCBIfam" id="NF009065">
    <property type="entry name" value="PRK12399.1"/>
    <property type="match status" value="1"/>
</dbReference>
<dbReference type="NCBIfam" id="NF009498">
    <property type="entry name" value="PRK12858.1"/>
    <property type="match status" value="1"/>
</dbReference>
<dbReference type="PANTHER" id="PTHR39340">
    <property type="entry name" value="SULFOFRUCTOSEPHOSPHATE ALDOLASE"/>
    <property type="match status" value="1"/>
</dbReference>
<dbReference type="PANTHER" id="PTHR39340:SF1">
    <property type="entry name" value="SULFOFRUCTOSEPHOSPHATE ALDOLASE"/>
    <property type="match status" value="1"/>
</dbReference>
<dbReference type="Pfam" id="PF01791">
    <property type="entry name" value="DeoC"/>
    <property type="match status" value="1"/>
</dbReference>
<dbReference type="SMART" id="SM01133">
    <property type="entry name" value="DeoC"/>
    <property type="match status" value="1"/>
</dbReference>
<dbReference type="SUPFAM" id="SSF51569">
    <property type="entry name" value="Aldolase"/>
    <property type="match status" value="1"/>
</dbReference>
<keyword id="KW-0423">Lactose metabolism</keyword>
<keyword id="KW-0456">Lyase</keyword>
<reference key="1">
    <citation type="journal article" date="2004" name="J. Infect. Dis.">
        <title>Progress toward characterization of the group A Streptococcus metagenome: complete genome sequence of a macrolide-resistant serotype M6 strain.</title>
        <authorList>
            <person name="Banks D.J."/>
            <person name="Porcella S.F."/>
            <person name="Barbian K.D."/>
            <person name="Beres S.B."/>
            <person name="Philips L.E."/>
            <person name="Voyich J.M."/>
            <person name="DeLeo F.R."/>
            <person name="Martin J.M."/>
            <person name="Somerville G.A."/>
            <person name="Musser J.M."/>
        </authorList>
    </citation>
    <scope>NUCLEOTIDE SEQUENCE [LARGE SCALE GENOMIC DNA]</scope>
    <source>
        <strain>ATCC BAA-946 / MGAS10394</strain>
    </source>
</reference>
<gene>
    <name evidence="1" type="primary">lacD2</name>
    <name type="ordered locus">M6_Spy1644</name>
</gene>
<sequence length="327" mass="36605">MTITLTENKRKSMEKLSIDGVISALAFDQRGALKRMMAQHQTKEPTVEQIEELKSLVSEELTPFASSILLDPEYGLPASRVRSEEAGLLLAYEKTGYDATTTSRLPDCLDVWSAKRIKEAGAEAVKFLLYYDIDGDQDVNEQKKAYIERIGSECRAEDIPFYLEILTYDEKIADNASPEFAKVKAHKVNEAMKVFSKERFGVDVLKVEVPVNMKFVEGFADGEILFTKEEAAQAFRDQEASTDLPYIYLSAGVSAKLFQDTLVFAAESGAKFNGVLCGRATWAGSVKVYIEEGPQAAREWLRTEGFKNIDELNKVLDKTASPWTEKM</sequence>
<comment type="catalytic activity">
    <reaction evidence="1">
        <text>D-tagatofuranose 1,6-bisphosphate = D-glyceraldehyde 3-phosphate + dihydroxyacetone phosphate</text>
        <dbReference type="Rhea" id="RHEA:22948"/>
        <dbReference type="ChEBI" id="CHEBI:57642"/>
        <dbReference type="ChEBI" id="CHEBI:58694"/>
        <dbReference type="ChEBI" id="CHEBI:59776"/>
        <dbReference type="EC" id="4.1.2.40"/>
    </reaction>
</comment>
<comment type="pathway">
    <text evidence="1">Carbohydrate metabolism; D-tagatose 6-phosphate degradation; D-glyceraldehyde 3-phosphate and glycerone phosphate from D-tagatose 6-phosphate: step 2/2.</text>
</comment>
<comment type="similarity">
    <text evidence="1">Belongs to the aldolase LacD family.</text>
</comment>
<feature type="chain" id="PRO_0000203967" description="Tagatose 1,6-diphosphate aldolase 2">
    <location>
        <begin position="1"/>
        <end position="327"/>
    </location>
</feature>
<accession>Q5X9Y4</accession>
<organism>
    <name type="scientific">Streptococcus pyogenes serotype M6 (strain ATCC BAA-946 / MGAS10394)</name>
    <dbReference type="NCBI Taxonomy" id="286636"/>
    <lineage>
        <taxon>Bacteria</taxon>
        <taxon>Bacillati</taxon>
        <taxon>Bacillota</taxon>
        <taxon>Bacilli</taxon>
        <taxon>Lactobacillales</taxon>
        <taxon>Streptococcaceae</taxon>
        <taxon>Streptococcus</taxon>
    </lineage>
</organism>
<name>LACD2_STRP6</name>
<evidence type="ECO:0000255" key="1">
    <source>
        <dbReference type="HAMAP-Rule" id="MF_00734"/>
    </source>
</evidence>
<proteinExistence type="inferred from homology"/>